<protein>
    <recommendedName>
        <fullName>U4/U6.U5 tri-snRNP-associated protein 1</fullName>
    </recommendedName>
    <alternativeName>
        <fullName>Squamous cell carcinoma antigen recognized by T-cells 1</fullName>
        <shortName>SART-1</shortName>
        <shortName>rSART-1</shortName>
    </alternativeName>
</protein>
<proteinExistence type="evidence at protein level"/>
<reference key="1">
    <citation type="journal article" date="1998" name="Jpn. J. Cancer Res.">
        <title>Sequence analysis of genes encoding rodent homologues of the human tumor-rejection antigen SART-1.</title>
        <authorList>
            <person name="Gotoh M."/>
            <person name="Shichijo S."/>
            <person name="Hoshino T."/>
            <person name="Imai Y."/>
            <person name="Imaizumi T."/>
            <person name="Inoue Y."/>
            <person name="Takasu H."/>
            <person name="Yamaoka T."/>
            <person name="Itoh K."/>
        </authorList>
    </citation>
    <scope>NUCLEOTIDE SEQUENCE [MRNA]</scope>
    <source>
        <tissue>Brain</tissue>
    </source>
</reference>
<reference key="2">
    <citation type="journal article" date="2004" name="Genome Res.">
        <title>The status, quality, and expansion of the NIH full-length cDNA project: the Mammalian Gene Collection (MGC).</title>
        <authorList>
            <consortium name="The MGC Project Team"/>
        </authorList>
    </citation>
    <scope>NUCLEOTIDE SEQUENCE [LARGE SCALE MRNA]</scope>
    <source>
        <tissue>Testis</tissue>
    </source>
</reference>
<reference key="3">
    <citation type="journal article" date="2012" name="Nat. Commun.">
        <title>Quantitative maps of protein phosphorylation sites across 14 different rat organs and tissues.</title>
        <authorList>
            <person name="Lundby A."/>
            <person name="Secher A."/>
            <person name="Lage K."/>
            <person name="Nordsborg N.B."/>
            <person name="Dmytriyev A."/>
            <person name="Lundby C."/>
            <person name="Olsen J.V."/>
        </authorList>
    </citation>
    <scope>PHOSPHORYLATION [LARGE SCALE ANALYSIS] AT SER-481; SER-597; SER-602 AND SER-604</scope>
    <scope>IDENTIFICATION BY MASS SPECTROMETRY [LARGE SCALE ANALYSIS]</scope>
</reference>
<comment type="function">
    <text evidence="1">Plays a role in mRNA splicing as a component of the U4/U6-U5 tri-snRNP, one of the building blocks of the spliceosome. May also bind to DNA.</text>
</comment>
<comment type="subunit">
    <text evidence="1">Identified in the spliceosome C complex. Component of the U4/U6-U5 tri-snRNP complex composed of the U4, U6 and U5 snRNAs and at least PRPF3, PRPF4, PRPF6, PRPF8, PRPF31, SNRNP200, TXNL4A, SNRNP40, DDX23, CD2BP2, PPIH, SNU13, EFTUD2, SART1 and USP39. Interacts with UBL5.</text>
</comment>
<comment type="subcellular location">
    <subcellularLocation>
        <location evidence="1">Nucleus</location>
    </subcellularLocation>
    <text evidence="1">Found in the nucleus of mitogen-activated peripheral blood mononuclear cells (PBMCs), tumor cells, or normal cell lines, but not in normal tissues except testis and fetal liver or in unstimulated PBMCs, suggesting preferential expression in proliferating cells.</text>
</comment>
<comment type="PTM">
    <text evidence="1">Sumoylated with SUMO2.</text>
</comment>
<comment type="similarity">
    <text evidence="5">Belongs to the SNU66/SART1 family.</text>
</comment>
<name>SNUT1_RAT</name>
<sequence length="806" mass="91011">MGSSKKHRGEKEAAGTTAAAGTGGTTEQPPRHREHKKHKHRSSGGGSSGGERRKRSRERGAERGSGRRGAEAEARSGAHGRERSQAEPSERRVKREKRDEGYEAAASSKASSGDASSLSIEETNKLRAKLGLKPLEVNAVKKEAGTKEEPVAADVINPMALRQREELREKLAAAKEKRLLNQKLGKIKTLGEDDPWLDDTAAWIERSRQLQKEKDLAEKRAKLLEEMDQEFGVSTLVEEEFEQRRQDLYSARDLQGLTVEHAIDSFREGETVVLTLKDKGVLQEGEDVLVNVNMVDKERADKNVELRKKKPDYLPYAEDESVDDLAQQKPRSILAKYDEELEGERPHSFRLEQGGMADGLRERELEEIRTKLRLQAQSLNTVGPRLASEYLSPEEMVTFKKTKRRVKKIRKKEKEVIMRADDLLPLGEDQTQDGDFGSRLRGRGRRRVPEVEEEALEDEEKDPVAQPPPSDDTRVENMDISDEEDGGALPSGPPELEEDEAELELQKQLEKGRRLRQLQQLQQLRDSGEKVLEIVKKLESRQRGWEEEEDPERKGTIVFNATSEFCRTLGEIPTYGLAGNREEQEELMDFERDEERSANGGSESDGEENIGWSTVNLDEEKQHQDFSASSTTILDEEPIVNRGLAAALLLCQNKGLLETTVQKVARVKAPNKSLPSAVYCIEDKMAIDDKYSRREEYRGFTQDFKEKDGYKPDVKIEYVDETGRKLTPKEAFRQLSHRFHGKGSGKMKTERRMKKLDEEALLKKMSSSDTPLGTVALLQEKQKAQKTPYIVLSGSGKSMNANTITK</sequence>
<keyword id="KW-0175">Coiled coil</keyword>
<keyword id="KW-1017">Isopeptide bond</keyword>
<keyword id="KW-0507">mRNA processing</keyword>
<keyword id="KW-0508">mRNA splicing</keyword>
<keyword id="KW-0539">Nucleus</keyword>
<keyword id="KW-0597">Phosphoprotein</keyword>
<keyword id="KW-1185">Reference proteome</keyword>
<keyword id="KW-0747">Spliceosome</keyword>
<keyword id="KW-0832">Ubl conjugation</keyword>
<organism>
    <name type="scientific">Rattus norvegicus</name>
    <name type="common">Rat</name>
    <dbReference type="NCBI Taxonomy" id="10116"/>
    <lineage>
        <taxon>Eukaryota</taxon>
        <taxon>Metazoa</taxon>
        <taxon>Chordata</taxon>
        <taxon>Craniata</taxon>
        <taxon>Vertebrata</taxon>
        <taxon>Euteleostomi</taxon>
        <taxon>Mammalia</taxon>
        <taxon>Eutheria</taxon>
        <taxon>Euarchontoglires</taxon>
        <taxon>Glires</taxon>
        <taxon>Rodentia</taxon>
        <taxon>Myomorpha</taxon>
        <taxon>Muroidea</taxon>
        <taxon>Muridae</taxon>
        <taxon>Murinae</taxon>
        <taxon>Rattus</taxon>
    </lineage>
</organism>
<dbReference type="EMBL" id="AB014722">
    <property type="protein sequence ID" value="BAA36584.1"/>
    <property type="molecule type" value="mRNA"/>
</dbReference>
<dbReference type="EMBL" id="BC083551">
    <property type="protein sequence ID" value="AAH83551.1"/>
    <property type="molecule type" value="mRNA"/>
</dbReference>
<dbReference type="RefSeq" id="NP_113784.1">
    <property type="nucleotide sequence ID" value="NM_031596.1"/>
</dbReference>
<dbReference type="SMR" id="Q5XIW8"/>
<dbReference type="FunCoup" id="Q5XIW8">
    <property type="interactions" value="4218"/>
</dbReference>
<dbReference type="STRING" id="10116.ENSRNOP00000027812"/>
<dbReference type="iPTMnet" id="Q5XIW8"/>
<dbReference type="PhosphoSitePlus" id="Q5XIW8"/>
<dbReference type="jPOST" id="Q5XIW8"/>
<dbReference type="PaxDb" id="10116-ENSRNOP00000027812"/>
<dbReference type="Ensembl" id="ENSRNOT00000027811.4">
    <property type="protein sequence ID" value="ENSRNOP00000027812.1"/>
    <property type="gene ID" value="ENSRNOG00000020475.4"/>
</dbReference>
<dbReference type="GeneID" id="29678"/>
<dbReference type="KEGG" id="rno:29678"/>
<dbReference type="UCSC" id="RGD:61930">
    <property type="organism name" value="rat"/>
</dbReference>
<dbReference type="AGR" id="RGD:61930"/>
<dbReference type="CTD" id="9092"/>
<dbReference type="RGD" id="61930">
    <property type="gene designation" value="Sart1"/>
</dbReference>
<dbReference type="eggNOG" id="KOG2217">
    <property type="taxonomic scope" value="Eukaryota"/>
</dbReference>
<dbReference type="GeneTree" id="ENSGT00390000007071"/>
<dbReference type="HOGENOM" id="CLU_009379_3_0_1"/>
<dbReference type="InParanoid" id="Q5XIW8"/>
<dbReference type="OMA" id="KRRDYTG"/>
<dbReference type="OrthoDB" id="82275at9989"/>
<dbReference type="PhylomeDB" id="Q5XIW8"/>
<dbReference type="TreeFam" id="TF318828"/>
<dbReference type="Reactome" id="R-RNO-72163">
    <property type="pathway name" value="mRNA Splicing - Major Pathway"/>
</dbReference>
<dbReference type="PRO" id="PR:Q5XIW8"/>
<dbReference type="Proteomes" id="UP000002494">
    <property type="component" value="Chromosome 1"/>
</dbReference>
<dbReference type="Bgee" id="ENSRNOG00000020475">
    <property type="expression patterns" value="Expressed in thymus and 20 other cell types or tissues"/>
</dbReference>
<dbReference type="GO" id="GO:0015030">
    <property type="term" value="C:Cajal body"/>
    <property type="evidence" value="ECO:0000266"/>
    <property type="project" value="RGD"/>
</dbReference>
<dbReference type="GO" id="GO:0071013">
    <property type="term" value="C:catalytic step 2 spliceosome"/>
    <property type="evidence" value="ECO:0000266"/>
    <property type="project" value="RGD"/>
</dbReference>
<dbReference type="GO" id="GO:0005794">
    <property type="term" value="C:Golgi apparatus"/>
    <property type="evidence" value="ECO:0007669"/>
    <property type="project" value="Ensembl"/>
</dbReference>
<dbReference type="GO" id="GO:0016607">
    <property type="term" value="C:nuclear speck"/>
    <property type="evidence" value="ECO:0007669"/>
    <property type="project" value="Ensembl"/>
</dbReference>
<dbReference type="GO" id="GO:0005654">
    <property type="term" value="C:nucleoplasm"/>
    <property type="evidence" value="ECO:0000266"/>
    <property type="project" value="RGD"/>
</dbReference>
<dbReference type="GO" id="GO:0005634">
    <property type="term" value="C:nucleus"/>
    <property type="evidence" value="ECO:0000266"/>
    <property type="project" value="RGD"/>
</dbReference>
<dbReference type="GO" id="GO:0071005">
    <property type="term" value="C:U2-type precatalytic spliceosome"/>
    <property type="evidence" value="ECO:0000266"/>
    <property type="project" value="RGD"/>
</dbReference>
<dbReference type="GO" id="GO:0046540">
    <property type="term" value="C:U4/U6 x U5 tri-snRNP complex"/>
    <property type="evidence" value="ECO:0000266"/>
    <property type="project" value="RGD"/>
</dbReference>
<dbReference type="GO" id="GO:0000481">
    <property type="term" value="P:maturation of 5S rRNA"/>
    <property type="evidence" value="ECO:0000318"/>
    <property type="project" value="GO_Central"/>
</dbReference>
<dbReference type="GO" id="GO:0045292">
    <property type="term" value="P:mRNA cis splicing, via spliceosome"/>
    <property type="evidence" value="ECO:0000318"/>
    <property type="project" value="GO_Central"/>
</dbReference>
<dbReference type="GO" id="GO:0000398">
    <property type="term" value="P:mRNA splicing, via spliceosome"/>
    <property type="evidence" value="ECO:0000266"/>
    <property type="project" value="RGD"/>
</dbReference>
<dbReference type="GO" id="GO:0045585">
    <property type="term" value="P:positive regulation of cytotoxic T cell differentiation"/>
    <property type="evidence" value="ECO:0000266"/>
    <property type="project" value="RGD"/>
</dbReference>
<dbReference type="InterPro" id="IPR045347">
    <property type="entry name" value="HIND"/>
</dbReference>
<dbReference type="InterPro" id="IPR005011">
    <property type="entry name" value="SNU66/SART1"/>
</dbReference>
<dbReference type="PANTHER" id="PTHR14152">
    <property type="entry name" value="SQUAMOUS CELL CARCINOMA ANTIGEN RECOGNISED BY CYTOTOXIC T LYMPHOCYTES"/>
    <property type="match status" value="1"/>
</dbReference>
<dbReference type="PANTHER" id="PTHR14152:SF5">
    <property type="entry name" value="U4_U6.U5 TRI-SNRNP-ASSOCIATED PROTEIN 1"/>
    <property type="match status" value="1"/>
</dbReference>
<dbReference type="Pfam" id="PF19252">
    <property type="entry name" value="HIND"/>
    <property type="match status" value="1"/>
</dbReference>
<dbReference type="Pfam" id="PF03343">
    <property type="entry name" value="SART-1"/>
    <property type="match status" value="1"/>
</dbReference>
<feature type="chain" id="PRO_0000223310" description="U4/U6.U5 tri-snRNP-associated protein 1">
    <location>
        <begin position="1"/>
        <end position="806"/>
    </location>
</feature>
<feature type="region of interest" description="Disordered" evidence="4">
    <location>
        <begin position="1"/>
        <end position="121"/>
    </location>
</feature>
<feature type="region of interest" description="Disordered" evidence="4">
    <location>
        <begin position="418"/>
        <end position="505"/>
    </location>
</feature>
<feature type="region of interest" description="Disordered" evidence="4">
    <location>
        <begin position="578"/>
        <end position="610"/>
    </location>
</feature>
<feature type="coiled-coil region" evidence="3">
    <location>
        <begin position="157"/>
        <end position="231"/>
    </location>
</feature>
<feature type="coiled-coil region" evidence="3">
    <location>
        <begin position="495"/>
        <end position="540"/>
    </location>
</feature>
<feature type="compositionally biased region" description="Basic residues" evidence="4">
    <location>
        <begin position="32"/>
        <end position="42"/>
    </location>
</feature>
<feature type="compositionally biased region" description="Basic and acidic residues" evidence="4">
    <location>
        <begin position="58"/>
        <end position="101"/>
    </location>
</feature>
<feature type="compositionally biased region" description="Low complexity" evidence="4">
    <location>
        <begin position="104"/>
        <end position="119"/>
    </location>
</feature>
<feature type="compositionally biased region" description="Acidic residues" evidence="4">
    <location>
        <begin position="451"/>
        <end position="461"/>
    </location>
</feature>
<feature type="modified residue" description="Phosphothreonine" evidence="2">
    <location>
        <position position="189"/>
    </location>
</feature>
<feature type="modified residue" description="Phosphoserine" evidence="1">
    <location>
        <position position="321"/>
    </location>
</feature>
<feature type="modified residue" description="Phosphoserine" evidence="1">
    <location>
        <position position="348"/>
    </location>
</feature>
<feature type="modified residue" description="Phosphothreonine" evidence="1">
    <location>
        <position position="431"/>
    </location>
</feature>
<feature type="modified residue" description="Phosphoserine" evidence="6">
    <location>
        <position position="481"/>
    </location>
</feature>
<feature type="modified residue" description="Phosphoserine" evidence="1">
    <location>
        <position position="527"/>
    </location>
</feature>
<feature type="modified residue" description="Phosphoserine" evidence="6">
    <location>
        <position position="597"/>
    </location>
</feature>
<feature type="modified residue" description="Phosphoserine" evidence="6">
    <location>
        <position position="602"/>
    </location>
</feature>
<feature type="modified residue" description="Phosphoserine" evidence="6">
    <location>
        <position position="604"/>
    </location>
</feature>
<feature type="modified residue" description="Phosphoserine" evidence="1">
    <location>
        <position position="627"/>
    </location>
</feature>
<feature type="modified residue" description="Phosphothreonine" evidence="1">
    <location>
        <position position="701"/>
    </location>
</feature>
<feature type="modified residue" description="Phosphoserine" evidence="1">
    <location>
        <position position="767"/>
    </location>
</feature>
<feature type="modified residue" description="Phosphothreonine" evidence="1">
    <location>
        <position position="770"/>
    </location>
</feature>
<feature type="modified residue" description="Phosphoserine" evidence="1">
    <location>
        <position position="795"/>
    </location>
</feature>
<feature type="cross-link" description="Glycyl lysine isopeptide (Lys-Gly) (interchain with G-Cter in SUMO2)" evidence="1">
    <location>
        <position position="125"/>
    </location>
</feature>
<feature type="cross-link" description="Glycyl lysine isopeptide (Lys-Gly) (interchain with G-Cter in SUMO2)" evidence="1">
    <location>
        <position position="133"/>
    </location>
</feature>
<feature type="cross-link" description="Glycyl lysine isopeptide (Lys-Gly) (interchain with G-Cter in SUMO1); alternate" evidence="1">
    <location>
        <position position="141"/>
    </location>
</feature>
<feature type="cross-link" description="Glycyl lysine isopeptide (Lys-Gly) (interchain with G-Cter in SUMO2); alternate" evidence="1">
    <location>
        <position position="141"/>
    </location>
</feature>
<feature type="cross-link" description="Glycyl lysine isopeptide (Lys-Gly) (interchain with G-Cter in SUMO2)" evidence="1">
    <location>
        <position position="147"/>
    </location>
</feature>
<feature type="cross-link" description="Glycyl lysine isopeptide (Lys-Gly) (interchain with G-Cter in SUMO2)" evidence="1">
    <location>
        <position position="188"/>
    </location>
</feature>
<feature type="cross-link" description="Glycyl lysine isopeptide (Lys-Gly) (interchain with G-Cter in SUMO2)" evidence="1">
    <location>
        <position position="277"/>
    </location>
</feature>
<feature type="cross-link" description="Glycyl lysine isopeptide (Lys-Gly) (interchain with G-Cter in SUMO2)" evidence="1">
    <location>
        <position position="329"/>
    </location>
</feature>
<feature type="cross-link" description="Glycyl lysine isopeptide (Lys-Gly) (interchain with G-Cter in SUMO2)" evidence="1">
    <location>
        <position position="336"/>
    </location>
</feature>
<feature type="cross-link" description="Glycyl lysine isopeptide (Lys-Gly) (interchain with G-Cter in SUMO2)" evidence="1">
    <location>
        <position position="400"/>
    </location>
</feature>
<feature type="cross-link" description="Glycyl lysine isopeptide (Lys-Gly) (interchain with G-Cter in SUMO2)" evidence="1">
    <location>
        <position position="414"/>
    </location>
</feature>
<feature type="cross-link" description="Glycyl lysine isopeptide (Lys-Gly) (interchain with G-Cter in SUMO2)" evidence="1">
    <location>
        <position position="554"/>
    </location>
</feature>
<feature type="cross-link" description="Glycyl lysine isopeptide (Lys-Gly) (interchain with G-Cter in SUMO2)" evidence="1">
    <location>
        <position position="654"/>
    </location>
</feature>
<feature type="cross-link" description="Glycyl lysine isopeptide (Lys-Gly) (interchain with G-Cter in SUMO2)" evidence="1">
    <location>
        <position position="663"/>
    </location>
</feature>
<feature type="cross-link" description="Glycyl lysine isopeptide (Lys-Gly) (interchain with G-Cter in SUMO2)" evidence="1">
    <location>
        <position position="690"/>
    </location>
</feature>
<feature type="cross-link" description="Glycyl lysine isopeptide (Lys-Gly) (interchain with G-Cter in SUMO2)" evidence="1">
    <location>
        <position position="705"/>
    </location>
</feature>
<feature type="cross-link" description="Glycyl lysine isopeptide (Lys-Gly) (interchain with G-Cter in SUMO2)" evidence="1">
    <location>
        <position position="715"/>
    </location>
</feature>
<feature type="cross-link" description="Glycyl lysine isopeptide (Lys-Gly) (interchain with G-Cter in SUMO2)" evidence="1">
    <location>
        <position position="729"/>
    </location>
</feature>
<feature type="cross-link" description="Glycyl lysine isopeptide (Lys-Gly) (interchain with G-Cter in SUMO2)" evidence="1">
    <location>
        <position position="755"/>
    </location>
</feature>
<feature type="cross-link" description="Glycyl lysine isopeptide (Lys-Gly) (interchain with G-Cter in SUMO2)" evidence="1">
    <location>
        <position position="764"/>
    </location>
</feature>
<feature type="cross-link" description="Glycyl lysine isopeptide (Lys-Gly) (interchain with G-Cter in SUMO2)" evidence="1">
    <location>
        <position position="781"/>
    </location>
</feature>
<feature type="cross-link" description="Glycyl lysine isopeptide (Lys-Gly) (interchain with G-Cter in SUMO2)" evidence="1">
    <location>
        <position position="786"/>
    </location>
</feature>
<feature type="cross-link" description="Glycyl lysine isopeptide (Lys-Gly) (interchain with G-Cter in SUMO2)" evidence="1">
    <location>
        <position position="797"/>
    </location>
</feature>
<feature type="sequence conflict" description="In Ref. 1; BAA36584." evidence="5" ref="1">
    <original>A</original>
    <variation>V</variation>
    <location>
        <position position="317"/>
    </location>
</feature>
<gene>
    <name type="primary">Sart1</name>
</gene>
<accession>Q5XIW8</accession>
<accession>Q9Z314</accession>
<evidence type="ECO:0000250" key="1">
    <source>
        <dbReference type="UniProtKB" id="O43290"/>
    </source>
</evidence>
<evidence type="ECO:0000250" key="2">
    <source>
        <dbReference type="UniProtKB" id="Q9Z315"/>
    </source>
</evidence>
<evidence type="ECO:0000255" key="3"/>
<evidence type="ECO:0000256" key="4">
    <source>
        <dbReference type="SAM" id="MobiDB-lite"/>
    </source>
</evidence>
<evidence type="ECO:0000305" key="5"/>
<evidence type="ECO:0007744" key="6">
    <source>
    </source>
</evidence>